<protein>
    <recommendedName>
        <fullName evidence="2">RNA-directed RNA polymerase catalytic subunit</fullName>
        <ecNumber evidence="2">2.7.7.48</ecNumber>
    </recommendedName>
    <alternativeName>
        <fullName evidence="2">Polymerase basic protein 1</fullName>
        <shortName evidence="2">PB1</shortName>
    </alternativeName>
    <alternativeName>
        <fullName evidence="2">RNA-directed RNA polymerase subunit P1</fullName>
    </alternativeName>
</protein>
<accession>A4U6W0</accession>
<dbReference type="EC" id="2.7.7.48" evidence="2"/>
<dbReference type="EMBL" id="CY021715">
    <property type="protein sequence ID" value="ABP49335.1"/>
    <property type="molecule type" value="Viral_cRNA"/>
</dbReference>
<dbReference type="SMR" id="A4U6W0"/>
<dbReference type="Proteomes" id="UP000008433">
    <property type="component" value="Genome"/>
</dbReference>
<dbReference type="GO" id="GO:0030430">
    <property type="term" value="C:host cell cytoplasm"/>
    <property type="evidence" value="ECO:0007669"/>
    <property type="project" value="UniProtKB-SubCell"/>
</dbReference>
<dbReference type="GO" id="GO:0042025">
    <property type="term" value="C:host cell nucleus"/>
    <property type="evidence" value="ECO:0007669"/>
    <property type="project" value="UniProtKB-SubCell"/>
</dbReference>
<dbReference type="GO" id="GO:0000166">
    <property type="term" value="F:nucleotide binding"/>
    <property type="evidence" value="ECO:0007669"/>
    <property type="project" value="UniProtKB-UniRule"/>
</dbReference>
<dbReference type="GO" id="GO:0003723">
    <property type="term" value="F:RNA binding"/>
    <property type="evidence" value="ECO:0007669"/>
    <property type="project" value="InterPro"/>
</dbReference>
<dbReference type="GO" id="GO:0003968">
    <property type="term" value="F:RNA-directed RNA polymerase activity"/>
    <property type="evidence" value="ECO:0007669"/>
    <property type="project" value="UniProtKB-UniRule"/>
</dbReference>
<dbReference type="GO" id="GO:0006351">
    <property type="term" value="P:DNA-templated transcription"/>
    <property type="evidence" value="ECO:0007669"/>
    <property type="project" value="UniProtKB-UniRule"/>
</dbReference>
<dbReference type="GO" id="GO:0039657">
    <property type="term" value="P:symbiont-mediated suppression of host gene expression"/>
    <property type="evidence" value="ECO:0007669"/>
    <property type="project" value="UniProtKB-KW"/>
</dbReference>
<dbReference type="GO" id="GO:0039523">
    <property type="term" value="P:symbiont-mediated suppression of host mRNA transcription via inhibition of RNA polymerase II activity"/>
    <property type="evidence" value="ECO:0007669"/>
    <property type="project" value="UniProtKB-UniRule"/>
</dbReference>
<dbReference type="GO" id="GO:0039694">
    <property type="term" value="P:viral RNA genome replication"/>
    <property type="evidence" value="ECO:0007669"/>
    <property type="project" value="UniProtKB-UniRule"/>
</dbReference>
<dbReference type="GO" id="GO:0019083">
    <property type="term" value="P:viral transcription"/>
    <property type="evidence" value="ECO:0007669"/>
    <property type="project" value="UniProtKB-KW"/>
</dbReference>
<dbReference type="Gene3D" id="6.10.140.720">
    <property type="match status" value="1"/>
</dbReference>
<dbReference type="HAMAP" id="MF_04065">
    <property type="entry name" value="INFV_RDRP"/>
    <property type="match status" value="1"/>
</dbReference>
<dbReference type="InterPro" id="IPR007099">
    <property type="entry name" value="RNA-dir_pol_NSvirus"/>
</dbReference>
<dbReference type="InterPro" id="IPR001407">
    <property type="entry name" value="RNA_pol_PB1_influenza"/>
</dbReference>
<dbReference type="Pfam" id="PF00602">
    <property type="entry name" value="Flu_PB1"/>
    <property type="match status" value="1"/>
</dbReference>
<dbReference type="PIRSF" id="PIRSF000827">
    <property type="entry name" value="RdRPol_OMV"/>
    <property type="match status" value="1"/>
</dbReference>
<dbReference type="PROSITE" id="PS50525">
    <property type="entry name" value="RDRP_SSRNA_NEG_SEG"/>
    <property type="match status" value="1"/>
</dbReference>
<gene>
    <name evidence="2" type="primary">PB1</name>
</gene>
<name>RDRP_I45A0</name>
<sequence length="757" mass="86575">MDVNPILLFLKVPAQNAISTTFPYTGDPPYSHGTGTGYTMDTVNRTHQYSERGKWTTNTETGAPQLNPIDGPLPEDNEPSGYAQTDCVLEAMAFLEESHPGIFENSCIETMEVVQQTRVDKLTQGRQTYDWTLNRNQPAATALANTIEVFRSNGLTANESGRLIDFLKDVMESMDKEEIEITTHFQRKRRVRDNVTKKMVTQRTIGKRKQRLNKRSYLIRALTLNTMTKDAERGKLKRRAIATPGMQIRGFVYFVETLARSICEKLEQSGLPVGGNEKKAKLANVVRKMMTNSQDTEISFTITGDNTKWNENQNPRMFLAMITYITRTQPEWFRNVLSIAPIMFSNKMARLGKGYMFESKSMKLRTQIPAEMLANIDLKYFNDSTRKKIEKIRPLLIDGTASLSPGMMMGMFNMLSTVLGVSILNLGQKRYTKTTYWWDGLQSSDDFALIVNAPNHEGIQAGVDRFYRTCKLLGINMSKKKSYINRTGTFEFTSFFYRYGFVANFSMELPSFGVSGINESADMSIGVTVIKNNMINNDLGPATAQMALQLFIKDYRYTYRCHRGDTQIQTRRSFEIKKLWEQTRSKAGLLVSDGGPNLYNIRNLHIPEVCLKWELMDEDYQGRLCNPLNPFVSHKEIESVNNAVMMPAHGPAKNMEYDAVATTHSWIPKRNRSILNTSQRGILEDEQMYQRCCNLFEKFFPSSSYRRPVGISSMVEAMVSRARIDARIDFESGRIKKEEFTEIMKICSTIEELRRQK</sequence>
<reference key="1">
    <citation type="submission" date="2007-04" db="EMBL/GenBank/DDBJ databases">
        <title>The NIAID influenza genome sequencing project.</title>
        <authorList>
            <person name="Ghedin E."/>
            <person name="Spiro D."/>
            <person name="Miller N."/>
            <person name="Zaborsky J."/>
            <person name="Feldblyum T."/>
            <person name="Subbu V."/>
            <person name="Shumway M."/>
            <person name="Sparenborg J."/>
            <person name="Groveman L."/>
            <person name="Halpin R."/>
            <person name="Sitz J."/>
            <person name="Koo H."/>
            <person name="Salzberg S.L."/>
            <person name="Webster R.G."/>
            <person name="Hoffmann E."/>
            <person name="Krauss S."/>
            <person name="Naeve C."/>
            <person name="Bao Y."/>
            <person name="Bolotov P."/>
            <person name="Dernovoy D."/>
            <person name="Kiryutin B."/>
            <person name="Lipman D.J."/>
            <person name="Tatusova T."/>
        </authorList>
    </citation>
    <scope>NUCLEOTIDE SEQUENCE [GENOMIC RNA]</scope>
</reference>
<reference key="2">
    <citation type="submission" date="2007-04" db="EMBL/GenBank/DDBJ databases">
        <authorList>
            <consortium name="The NIAID Influenza Genome Sequencing Consortium"/>
        </authorList>
    </citation>
    <scope>NUCLEOTIDE SEQUENCE [GENOMIC RNA]</scope>
</reference>
<proteinExistence type="inferred from homology"/>
<organismHost>
    <name type="scientific">Aves</name>
    <dbReference type="NCBI Taxonomy" id="8782"/>
</organismHost>
<organismHost>
    <name type="scientific">Homo sapiens</name>
    <name type="common">Human</name>
    <dbReference type="NCBI Taxonomy" id="9606"/>
</organismHost>
<organismHost>
    <name type="scientific">Sus scrofa</name>
    <name type="common">Pig</name>
    <dbReference type="NCBI Taxonomy" id="9823"/>
</organismHost>
<evidence type="ECO:0000250" key="1">
    <source>
        <dbReference type="UniProtKB" id="P03431"/>
    </source>
</evidence>
<evidence type="ECO:0000255" key="2">
    <source>
        <dbReference type="HAMAP-Rule" id="MF_04065"/>
    </source>
</evidence>
<evidence type="ECO:0000256" key="3">
    <source>
        <dbReference type="SAM" id="MobiDB-lite"/>
    </source>
</evidence>
<keyword id="KW-1262">Eukaryotic host gene expression shutoff by virus</keyword>
<keyword id="KW-1191">Eukaryotic host transcription shutoff by virus</keyword>
<keyword id="KW-1035">Host cytoplasm</keyword>
<keyword id="KW-1190">Host gene expression shutoff by virus</keyword>
<keyword id="KW-1048">Host nucleus</keyword>
<keyword id="KW-0945">Host-virus interaction</keyword>
<keyword id="KW-1104">Inhibition of host RNA polymerase II by virus</keyword>
<keyword id="KW-0547">Nucleotide-binding</keyword>
<keyword id="KW-0548">Nucleotidyltransferase</keyword>
<keyword id="KW-0597">Phosphoprotein</keyword>
<keyword id="KW-0696">RNA-directed RNA polymerase</keyword>
<keyword id="KW-0808">Transferase</keyword>
<keyword id="KW-0693">Viral RNA replication</keyword>
<keyword id="KW-1195">Viral transcription</keyword>
<organism>
    <name type="scientific">Influenza A virus (strain A/USA:Huston/AA/1945 H1N1)</name>
    <dbReference type="NCBI Taxonomy" id="425551"/>
    <lineage>
        <taxon>Viruses</taxon>
        <taxon>Riboviria</taxon>
        <taxon>Orthornavirae</taxon>
        <taxon>Negarnaviricota</taxon>
        <taxon>Polyploviricotina</taxon>
        <taxon>Insthoviricetes</taxon>
        <taxon>Articulavirales</taxon>
        <taxon>Orthomyxoviridae</taxon>
        <taxon>Alphainfluenzavirus</taxon>
        <taxon>Alphainfluenzavirus influenzae</taxon>
        <taxon>Influenza A virus</taxon>
    </lineage>
</organism>
<comment type="function">
    <text evidence="2">RNA-dependent RNA polymerase which is responsible for replication and transcription of virus RNA segments. The transcription of viral mRNAs occurs by a unique mechanism called cap-snatching. 5' methylated caps of cellular mRNAs are cleaved after 10-13 nucleotides by PA. In turn, these short capped RNAs are used as primers by PB1 for transcription of viral mRNAs. During virus replication, PB1 initiates RNA synthesis and copy vRNA into complementary RNA (cRNA) which in turn serves as a template for the production of more vRNAs.</text>
</comment>
<comment type="catalytic activity">
    <reaction evidence="2">
        <text>RNA(n) + a ribonucleoside 5'-triphosphate = RNA(n+1) + diphosphate</text>
        <dbReference type="Rhea" id="RHEA:21248"/>
        <dbReference type="Rhea" id="RHEA-COMP:14527"/>
        <dbReference type="Rhea" id="RHEA-COMP:17342"/>
        <dbReference type="ChEBI" id="CHEBI:33019"/>
        <dbReference type="ChEBI" id="CHEBI:61557"/>
        <dbReference type="ChEBI" id="CHEBI:140395"/>
        <dbReference type="EC" id="2.7.7.48"/>
    </reaction>
</comment>
<comment type="subunit">
    <text evidence="1 2">Influenza RNA polymerase is composed of three subunits: PB1, PB2 and PA. Interacts (via N-terminus) with PA (via C-terminus). Interacts (via C-terminus) with PB2 (via N-terminus); this interaction is essential for transcription initiation. Interacts (via C-terminus) with human PKP2 (via N-terminus); the interaction competitively inhibits the interaction between the RNA polymerase subunits PB1 and PB2 (By similarity).</text>
</comment>
<comment type="subcellular location">
    <subcellularLocation>
        <location evidence="2">Host nucleus</location>
    </subcellularLocation>
    <subcellularLocation>
        <location evidence="2">Host cytoplasm</location>
    </subcellularLocation>
</comment>
<comment type="PTM">
    <text evidence="2">Phosphorylated by host PRKCA.</text>
</comment>
<comment type="similarity">
    <text evidence="2">Belongs to the influenza viruses polymerase PB1 family.</text>
</comment>
<feature type="chain" id="PRO_0000373050" description="RNA-directed RNA polymerase catalytic subunit">
    <location>
        <begin position="1"/>
        <end position="757"/>
    </location>
</feature>
<feature type="domain" description="RdRp catalytic" evidence="2">
    <location>
        <begin position="286"/>
        <end position="483"/>
    </location>
</feature>
<feature type="region of interest" description="Disordered" evidence="3">
    <location>
        <begin position="52"/>
        <end position="81"/>
    </location>
</feature>
<feature type="region of interest" description="Promoter-binding site" evidence="2">
    <location>
        <begin position="249"/>
        <end position="256"/>
    </location>
</feature>
<feature type="short sequence motif" description="Nuclear localization signal" evidence="2">
    <location>
        <begin position="187"/>
        <end position="195"/>
    </location>
</feature>
<feature type="short sequence motif" description="Nuclear localization signal" evidence="2">
    <location>
        <begin position="203"/>
        <end position="216"/>
    </location>
</feature>
<feature type="compositionally biased region" description="Polar residues" evidence="3">
    <location>
        <begin position="55"/>
        <end position="64"/>
    </location>
</feature>